<organism>
    <name type="scientific">Vibrio vulnificus (strain CMCP6)</name>
    <dbReference type="NCBI Taxonomy" id="216895"/>
    <lineage>
        <taxon>Bacteria</taxon>
        <taxon>Pseudomonadati</taxon>
        <taxon>Pseudomonadota</taxon>
        <taxon>Gammaproteobacteria</taxon>
        <taxon>Vibrionales</taxon>
        <taxon>Vibrionaceae</taxon>
        <taxon>Vibrio</taxon>
    </lineage>
</organism>
<name>Y131_VIBVU</name>
<evidence type="ECO:0000255" key="1">
    <source>
        <dbReference type="HAMAP-Rule" id="MF_01866"/>
    </source>
</evidence>
<evidence type="ECO:0000256" key="2">
    <source>
        <dbReference type="SAM" id="MobiDB-lite"/>
    </source>
</evidence>
<protein>
    <recommendedName>
        <fullName evidence="1">YcgL domain-containing protein VV1_0131</fullName>
    </recommendedName>
</protein>
<dbReference type="EMBL" id="AE016795">
    <property type="protein sequence ID" value="AAO08669.1"/>
    <property type="molecule type" value="Genomic_DNA"/>
</dbReference>
<dbReference type="RefSeq" id="WP_011078248.1">
    <property type="nucleotide sequence ID" value="NC_004459.3"/>
</dbReference>
<dbReference type="SMR" id="Q8DFS5"/>
<dbReference type="KEGG" id="vvu:VV1_0131"/>
<dbReference type="HOGENOM" id="CLU_155118_1_0_6"/>
<dbReference type="Proteomes" id="UP000002275">
    <property type="component" value="Chromosome 1"/>
</dbReference>
<dbReference type="Gene3D" id="3.10.510.20">
    <property type="entry name" value="YcgL domain"/>
    <property type="match status" value="1"/>
</dbReference>
<dbReference type="HAMAP" id="MF_01866">
    <property type="entry name" value="UPF0745"/>
    <property type="match status" value="1"/>
</dbReference>
<dbReference type="InterPro" id="IPR038068">
    <property type="entry name" value="YcgL-like_sf"/>
</dbReference>
<dbReference type="InterPro" id="IPR027354">
    <property type="entry name" value="YcgL_dom"/>
</dbReference>
<dbReference type="PANTHER" id="PTHR38109">
    <property type="entry name" value="PROTEIN YCGL"/>
    <property type="match status" value="1"/>
</dbReference>
<dbReference type="PANTHER" id="PTHR38109:SF1">
    <property type="entry name" value="PROTEIN YCGL"/>
    <property type="match status" value="1"/>
</dbReference>
<dbReference type="Pfam" id="PF05166">
    <property type="entry name" value="YcgL"/>
    <property type="match status" value="1"/>
</dbReference>
<dbReference type="SUPFAM" id="SSF160191">
    <property type="entry name" value="YcgL-like"/>
    <property type="match status" value="1"/>
</dbReference>
<dbReference type="PROSITE" id="PS51648">
    <property type="entry name" value="YCGL"/>
    <property type="match status" value="1"/>
</dbReference>
<reference key="1">
    <citation type="submission" date="2002-12" db="EMBL/GenBank/DDBJ databases">
        <title>Complete genome sequence of Vibrio vulnificus CMCP6.</title>
        <authorList>
            <person name="Rhee J.H."/>
            <person name="Kim S.Y."/>
            <person name="Chung S.S."/>
            <person name="Kim J.J."/>
            <person name="Moon Y.H."/>
            <person name="Jeong H."/>
            <person name="Choy H.E."/>
        </authorList>
    </citation>
    <scope>NUCLEOTIDE SEQUENCE [LARGE SCALE GENOMIC DNA]</scope>
    <source>
        <strain>CMCP6</strain>
    </source>
</reference>
<feature type="chain" id="PRO_0000375400" description="YcgL domain-containing protein VV1_0131">
    <location>
        <begin position="1"/>
        <end position="93"/>
    </location>
</feature>
<feature type="domain" description="YcgL" evidence="1">
    <location>
        <begin position="1"/>
        <end position="84"/>
    </location>
</feature>
<feature type="region of interest" description="Disordered" evidence="2">
    <location>
        <begin position="72"/>
        <end position="93"/>
    </location>
</feature>
<sequence>MLCSIYKSSKKEGTYLYIPKKDDFSQVPDTLMQMFGKPSHVMTVNLEGRSLALVNIEKVKESLNNEGFFLQLPPPPENLLQQHKERKAQQKND</sequence>
<accession>Q8DFS5</accession>
<gene>
    <name type="ordered locus">VV1_0131</name>
</gene>
<proteinExistence type="inferred from homology"/>